<geneLocation type="chloroplast"/>
<keyword id="KW-0150">Chloroplast</keyword>
<keyword id="KW-0934">Plastid</keyword>
<keyword id="KW-1185">Reference proteome</keyword>
<keyword id="KW-0687">Ribonucleoprotein</keyword>
<keyword id="KW-0689">Ribosomal protein</keyword>
<keyword id="KW-0694">RNA-binding</keyword>
<keyword id="KW-0699">rRNA-binding</keyword>
<name>RR14_TOBAC</name>
<reference key="1">
    <citation type="journal article" date="1986" name="EMBO J.">
        <title>The complete nucleotide sequence of the tobacco chloroplast genome: its gene organization and expression.</title>
        <authorList>
            <person name="Shinozaki K."/>
            <person name="Ohme M."/>
            <person name="Tanaka M."/>
            <person name="Wakasugi T."/>
            <person name="Hayashida N."/>
            <person name="Matsubayashi T."/>
            <person name="Zaita N."/>
            <person name="Chunwongse J."/>
            <person name="Obokata J."/>
            <person name="Yamaguchi-Shinozaki K."/>
            <person name="Ohto C."/>
            <person name="Torazawa K."/>
            <person name="Meng B.-Y."/>
            <person name="Sugita M."/>
            <person name="Deno H."/>
            <person name="Kamogashira T."/>
            <person name="Yamada K."/>
            <person name="Kusuda J."/>
            <person name="Takaiwa F."/>
            <person name="Kato A."/>
            <person name="Tohdoh N."/>
            <person name="Shimada H."/>
            <person name="Sugiura M."/>
        </authorList>
    </citation>
    <scope>NUCLEOTIDE SEQUENCE [LARGE SCALE GENOMIC DNA]</scope>
    <source>
        <strain>cv. Bright Yellow 4</strain>
    </source>
</reference>
<proteinExistence type="inferred from homology"/>
<accession>P06371</accession>
<comment type="function">
    <text evidence="1">Binds 16S rRNA, required for the assembly of 30S particles.</text>
</comment>
<comment type="subunit">
    <text evidence="1">Part of the 30S ribosomal subunit.</text>
</comment>
<comment type="subcellular location">
    <subcellularLocation>
        <location>Plastid</location>
        <location>Chloroplast</location>
    </subcellularLocation>
</comment>
<comment type="similarity">
    <text evidence="1">Belongs to the universal ribosomal protein uS14 family.</text>
</comment>
<dbReference type="EMBL" id="Z00044">
    <property type="protein sequence ID" value="CAA77350.1"/>
    <property type="molecule type" value="Genomic_DNA"/>
</dbReference>
<dbReference type="PIR" id="A02734">
    <property type="entry name" value="R3NT14"/>
</dbReference>
<dbReference type="RefSeq" id="NP_054495.1">
    <property type="nucleotide sequence ID" value="NC_001879.2"/>
</dbReference>
<dbReference type="SMR" id="P06371"/>
<dbReference type="GeneID" id="800488"/>
<dbReference type="KEGG" id="nta:800488"/>
<dbReference type="OMA" id="RIKFRDL"/>
<dbReference type="OrthoDB" id="413436at2759"/>
<dbReference type="Proteomes" id="UP000084051">
    <property type="component" value="Unplaced"/>
</dbReference>
<dbReference type="GO" id="GO:0009507">
    <property type="term" value="C:chloroplast"/>
    <property type="evidence" value="ECO:0007669"/>
    <property type="project" value="UniProtKB-SubCell"/>
</dbReference>
<dbReference type="GO" id="GO:1990904">
    <property type="term" value="C:ribonucleoprotein complex"/>
    <property type="evidence" value="ECO:0007669"/>
    <property type="project" value="UniProtKB-KW"/>
</dbReference>
<dbReference type="GO" id="GO:0005840">
    <property type="term" value="C:ribosome"/>
    <property type="evidence" value="ECO:0007669"/>
    <property type="project" value="UniProtKB-KW"/>
</dbReference>
<dbReference type="GO" id="GO:0019843">
    <property type="term" value="F:rRNA binding"/>
    <property type="evidence" value="ECO:0007669"/>
    <property type="project" value="UniProtKB-UniRule"/>
</dbReference>
<dbReference type="GO" id="GO:0003735">
    <property type="term" value="F:structural constituent of ribosome"/>
    <property type="evidence" value="ECO:0007669"/>
    <property type="project" value="InterPro"/>
</dbReference>
<dbReference type="GO" id="GO:0006412">
    <property type="term" value="P:translation"/>
    <property type="evidence" value="ECO:0007669"/>
    <property type="project" value="UniProtKB-UniRule"/>
</dbReference>
<dbReference type="FunFam" id="1.10.287.1480:FF:000001">
    <property type="entry name" value="30S ribosomal protein S14"/>
    <property type="match status" value="1"/>
</dbReference>
<dbReference type="Gene3D" id="1.10.287.1480">
    <property type="match status" value="1"/>
</dbReference>
<dbReference type="HAMAP" id="MF_00537">
    <property type="entry name" value="Ribosomal_uS14_1"/>
    <property type="match status" value="1"/>
</dbReference>
<dbReference type="InterPro" id="IPR001209">
    <property type="entry name" value="Ribosomal_uS14"/>
</dbReference>
<dbReference type="InterPro" id="IPR023036">
    <property type="entry name" value="Ribosomal_uS14_bac/plastid"/>
</dbReference>
<dbReference type="InterPro" id="IPR018271">
    <property type="entry name" value="Ribosomal_uS14_CS"/>
</dbReference>
<dbReference type="NCBIfam" id="NF006477">
    <property type="entry name" value="PRK08881.1"/>
    <property type="match status" value="1"/>
</dbReference>
<dbReference type="PANTHER" id="PTHR19836">
    <property type="entry name" value="30S RIBOSOMAL PROTEIN S14"/>
    <property type="match status" value="1"/>
</dbReference>
<dbReference type="PANTHER" id="PTHR19836:SF19">
    <property type="entry name" value="SMALL RIBOSOMAL SUBUNIT PROTEIN US14M"/>
    <property type="match status" value="1"/>
</dbReference>
<dbReference type="Pfam" id="PF00253">
    <property type="entry name" value="Ribosomal_S14"/>
    <property type="match status" value="1"/>
</dbReference>
<dbReference type="SUPFAM" id="SSF57716">
    <property type="entry name" value="Glucocorticoid receptor-like (DNA-binding domain)"/>
    <property type="match status" value="1"/>
</dbReference>
<dbReference type="PROSITE" id="PS00527">
    <property type="entry name" value="RIBOSOMAL_S14"/>
    <property type="match status" value="1"/>
</dbReference>
<protein>
    <recommendedName>
        <fullName evidence="1">Small ribosomal subunit protein uS14c</fullName>
    </recommendedName>
    <alternativeName>
        <fullName evidence="3">30S ribosomal protein S14, chloroplastic</fullName>
    </alternativeName>
</protein>
<organism>
    <name type="scientific">Nicotiana tabacum</name>
    <name type="common">Common tobacco</name>
    <dbReference type="NCBI Taxonomy" id="4097"/>
    <lineage>
        <taxon>Eukaryota</taxon>
        <taxon>Viridiplantae</taxon>
        <taxon>Streptophyta</taxon>
        <taxon>Embryophyta</taxon>
        <taxon>Tracheophyta</taxon>
        <taxon>Spermatophyta</taxon>
        <taxon>Magnoliopsida</taxon>
        <taxon>eudicotyledons</taxon>
        <taxon>Gunneridae</taxon>
        <taxon>Pentapetalae</taxon>
        <taxon>asterids</taxon>
        <taxon>lamiids</taxon>
        <taxon>Solanales</taxon>
        <taxon>Solanaceae</taxon>
        <taxon>Nicotianoideae</taxon>
        <taxon>Nicotianeae</taxon>
        <taxon>Nicotiana</taxon>
    </lineage>
</organism>
<evidence type="ECO:0000255" key="1">
    <source>
        <dbReference type="HAMAP-Rule" id="MF_00537"/>
    </source>
</evidence>
<evidence type="ECO:0000256" key="2">
    <source>
        <dbReference type="SAM" id="MobiDB-lite"/>
    </source>
</evidence>
<evidence type="ECO:0000305" key="3"/>
<gene>
    <name evidence="1" type="primary">rps14</name>
</gene>
<feature type="chain" id="PRO_0000130986" description="Small ribosomal subunit protein uS14c">
    <location>
        <begin position="1"/>
        <end position="100"/>
    </location>
</feature>
<feature type="region of interest" description="Disordered" evidence="2">
    <location>
        <begin position="1"/>
        <end position="31"/>
    </location>
</feature>
<sequence length="100" mass="11744">MARKSLIQREKKRQKLEQKYHSIRRSSKKEISKVPSLSDKWEIYGKLQSPPRNSAPTRLHRRCFLTGRPRANYRDFGLSGHILREMVHACLLPGATRSSW</sequence>